<dbReference type="EMBL" id="AF177031">
    <property type="protein sequence ID" value="AAD51364.1"/>
    <property type="molecule type" value="mRNA"/>
</dbReference>
<dbReference type="RefSeq" id="NP_445842.1">
    <property type="nucleotide sequence ID" value="NM_053390.1"/>
</dbReference>
<dbReference type="SMR" id="Q9R103"/>
<dbReference type="FunCoup" id="Q9R103">
    <property type="interactions" value="219"/>
</dbReference>
<dbReference type="STRING" id="10116.ENSRNOP00000012832"/>
<dbReference type="GlyCosmos" id="Q9R103">
    <property type="glycosylation" value="3 sites, No reported glycans"/>
</dbReference>
<dbReference type="GlyGen" id="Q9R103">
    <property type="glycosylation" value="3 sites"/>
</dbReference>
<dbReference type="PhosphoSitePlus" id="Q9R103"/>
<dbReference type="PaxDb" id="10116-ENSRNOP00000012832"/>
<dbReference type="GeneID" id="84405"/>
<dbReference type="KEGG" id="rno:84405"/>
<dbReference type="UCSC" id="RGD:620562">
    <property type="organism name" value="rat"/>
</dbReference>
<dbReference type="AGR" id="RGD:620562"/>
<dbReference type="CTD" id="3592"/>
<dbReference type="RGD" id="620562">
    <property type="gene designation" value="Il12a"/>
</dbReference>
<dbReference type="eggNOG" id="ENOG502S8JN">
    <property type="taxonomic scope" value="Eukaryota"/>
</dbReference>
<dbReference type="InParanoid" id="Q9R103"/>
<dbReference type="OrthoDB" id="64322at9989"/>
<dbReference type="PhylomeDB" id="Q9R103"/>
<dbReference type="Reactome" id="R-RNO-8984722">
    <property type="pathway name" value="Interleukin-35 Signalling"/>
</dbReference>
<dbReference type="Reactome" id="R-RNO-9020591">
    <property type="pathway name" value="Interleukin-12 signaling"/>
</dbReference>
<dbReference type="PRO" id="PR:Q9R103"/>
<dbReference type="Proteomes" id="UP000002494">
    <property type="component" value="Unplaced"/>
</dbReference>
<dbReference type="GO" id="GO:0009986">
    <property type="term" value="C:cell surface"/>
    <property type="evidence" value="ECO:0000266"/>
    <property type="project" value="RGD"/>
</dbReference>
<dbReference type="GO" id="GO:0005737">
    <property type="term" value="C:cytoplasm"/>
    <property type="evidence" value="ECO:0000266"/>
    <property type="project" value="RGD"/>
</dbReference>
<dbReference type="GO" id="GO:0005615">
    <property type="term" value="C:extracellular space"/>
    <property type="evidence" value="ECO:0000266"/>
    <property type="project" value="RGD"/>
</dbReference>
<dbReference type="GO" id="GO:0043514">
    <property type="term" value="C:interleukin-12 complex"/>
    <property type="evidence" value="ECO:0000266"/>
    <property type="project" value="RGD"/>
</dbReference>
<dbReference type="GO" id="GO:0005125">
    <property type="term" value="F:cytokine activity"/>
    <property type="evidence" value="ECO:0000266"/>
    <property type="project" value="RGD"/>
</dbReference>
<dbReference type="GO" id="GO:0008083">
    <property type="term" value="F:growth factor activity"/>
    <property type="evidence" value="ECO:0007669"/>
    <property type="project" value="UniProtKB-KW"/>
</dbReference>
<dbReference type="GO" id="GO:0042163">
    <property type="term" value="F:interleukin-12 beta subunit binding"/>
    <property type="evidence" value="ECO:0000266"/>
    <property type="project" value="RGD"/>
</dbReference>
<dbReference type="GO" id="GO:0005143">
    <property type="term" value="F:interleukin-12 receptor binding"/>
    <property type="evidence" value="ECO:0000318"/>
    <property type="project" value="GO_Central"/>
</dbReference>
<dbReference type="GO" id="GO:0045513">
    <property type="term" value="F:interleukin-27 binding"/>
    <property type="evidence" value="ECO:0000266"/>
    <property type="project" value="RGD"/>
</dbReference>
<dbReference type="GO" id="GO:0046982">
    <property type="term" value="F:protein heterodimerization activity"/>
    <property type="evidence" value="ECO:0000266"/>
    <property type="project" value="RGD"/>
</dbReference>
<dbReference type="GO" id="GO:0016477">
    <property type="term" value="P:cell migration"/>
    <property type="evidence" value="ECO:0000266"/>
    <property type="project" value="RGD"/>
</dbReference>
<dbReference type="GO" id="GO:0008283">
    <property type="term" value="P:cell population proliferation"/>
    <property type="evidence" value="ECO:0000266"/>
    <property type="project" value="RGD"/>
</dbReference>
<dbReference type="GO" id="GO:0071222">
    <property type="term" value="P:cellular response to lipopolysaccharide"/>
    <property type="evidence" value="ECO:0000266"/>
    <property type="project" value="RGD"/>
</dbReference>
<dbReference type="GO" id="GO:0050830">
    <property type="term" value="P:defense response to Gram-positive bacterium"/>
    <property type="evidence" value="ECO:0000266"/>
    <property type="project" value="RGD"/>
</dbReference>
<dbReference type="GO" id="GO:0042832">
    <property type="term" value="P:defense response to protozoan"/>
    <property type="evidence" value="ECO:0000266"/>
    <property type="project" value="RGD"/>
</dbReference>
<dbReference type="GO" id="GO:0097191">
    <property type="term" value="P:extrinsic apoptotic signaling pathway"/>
    <property type="evidence" value="ECO:0000266"/>
    <property type="project" value="RGD"/>
</dbReference>
<dbReference type="GO" id="GO:0006955">
    <property type="term" value="P:immune response"/>
    <property type="evidence" value="ECO:0007669"/>
    <property type="project" value="InterPro"/>
</dbReference>
<dbReference type="GO" id="GO:0035722">
    <property type="term" value="P:interleukin-12-mediated signaling pathway"/>
    <property type="evidence" value="ECO:0000266"/>
    <property type="project" value="RGD"/>
</dbReference>
<dbReference type="GO" id="GO:1903588">
    <property type="term" value="P:negative regulation of blood vessel endothelial cell proliferation involved in sprouting angiogenesis"/>
    <property type="evidence" value="ECO:0000266"/>
    <property type="project" value="RGD"/>
</dbReference>
<dbReference type="GO" id="GO:0032700">
    <property type="term" value="P:negative regulation of interleukin-17 production"/>
    <property type="evidence" value="ECO:0000266"/>
    <property type="project" value="RGD"/>
</dbReference>
<dbReference type="GO" id="GO:0050709">
    <property type="term" value="P:negative regulation of protein secretion"/>
    <property type="evidence" value="ECO:0000266"/>
    <property type="project" value="RGD"/>
</dbReference>
<dbReference type="GO" id="GO:0048662">
    <property type="term" value="P:negative regulation of smooth muscle cell proliferation"/>
    <property type="evidence" value="ECO:0000266"/>
    <property type="project" value="RGD"/>
</dbReference>
<dbReference type="GO" id="GO:1900747">
    <property type="term" value="P:negative regulation of vascular endothelial growth factor signaling pathway"/>
    <property type="evidence" value="ECO:0000266"/>
    <property type="project" value="RGD"/>
</dbReference>
<dbReference type="GO" id="GO:0045785">
    <property type="term" value="P:positive regulation of cell adhesion"/>
    <property type="evidence" value="ECO:0000266"/>
    <property type="project" value="RGD"/>
</dbReference>
<dbReference type="GO" id="GO:2000510">
    <property type="term" value="P:positive regulation of dendritic cell chemotaxis"/>
    <property type="evidence" value="ECO:0000266"/>
    <property type="project" value="RGD"/>
</dbReference>
<dbReference type="GO" id="GO:0050671">
    <property type="term" value="P:positive regulation of lymphocyte proliferation"/>
    <property type="evidence" value="ECO:0000266"/>
    <property type="project" value="RGD"/>
</dbReference>
<dbReference type="GO" id="GO:0032946">
    <property type="term" value="P:positive regulation of mononuclear cell proliferation"/>
    <property type="evidence" value="ECO:0000266"/>
    <property type="project" value="RGD"/>
</dbReference>
<dbReference type="GO" id="GO:0032816">
    <property type="term" value="P:positive regulation of natural killer cell activation"/>
    <property type="evidence" value="ECO:0000266"/>
    <property type="project" value="RGD"/>
</dbReference>
<dbReference type="GO" id="GO:0045954">
    <property type="term" value="P:positive regulation of natural killer cell mediated cytotoxicity"/>
    <property type="evidence" value="ECO:0000266"/>
    <property type="project" value="RGD"/>
</dbReference>
<dbReference type="GO" id="GO:0002860">
    <property type="term" value="P:positive regulation of natural killer cell mediated cytotoxicity directed against tumor cell target"/>
    <property type="evidence" value="ECO:0000266"/>
    <property type="project" value="RGD"/>
</dbReference>
<dbReference type="GO" id="GO:0051135">
    <property type="term" value="P:positive regulation of NK T cell activation"/>
    <property type="evidence" value="ECO:0000266"/>
    <property type="project" value="RGD"/>
</dbReference>
<dbReference type="GO" id="GO:0034393">
    <property type="term" value="P:positive regulation of smooth muscle cell apoptotic process"/>
    <property type="evidence" value="ECO:0000266"/>
    <property type="project" value="RGD"/>
</dbReference>
<dbReference type="GO" id="GO:0045582">
    <property type="term" value="P:positive regulation of T cell differentiation"/>
    <property type="evidence" value="ECO:0000266"/>
    <property type="project" value="RGD"/>
</dbReference>
<dbReference type="GO" id="GO:0001916">
    <property type="term" value="P:positive regulation of T cell mediated cytotoxicity"/>
    <property type="evidence" value="ECO:0000266"/>
    <property type="project" value="RGD"/>
</dbReference>
<dbReference type="GO" id="GO:0042102">
    <property type="term" value="P:positive regulation of T cell proliferation"/>
    <property type="evidence" value="ECO:0000266"/>
    <property type="project" value="RGD"/>
</dbReference>
<dbReference type="GO" id="GO:0032729">
    <property type="term" value="P:positive regulation of type II interferon production"/>
    <property type="evidence" value="ECO:0000266"/>
    <property type="project" value="RGD"/>
</dbReference>
<dbReference type="GO" id="GO:1990638">
    <property type="term" value="P:response to granulocyte colony-stimulating factor"/>
    <property type="evidence" value="ECO:0000270"/>
    <property type="project" value="RGD"/>
</dbReference>
<dbReference type="GO" id="GO:0032496">
    <property type="term" value="P:response to lipopolysaccharide"/>
    <property type="evidence" value="ECO:0000266"/>
    <property type="project" value="RGD"/>
</dbReference>
<dbReference type="GO" id="GO:0010224">
    <property type="term" value="P:response to UV-B"/>
    <property type="evidence" value="ECO:0000266"/>
    <property type="project" value="RGD"/>
</dbReference>
<dbReference type="GO" id="GO:0009615">
    <property type="term" value="P:response to virus"/>
    <property type="evidence" value="ECO:0000266"/>
    <property type="project" value="RGD"/>
</dbReference>
<dbReference type="GO" id="GO:0042098">
    <property type="term" value="P:T cell proliferation"/>
    <property type="evidence" value="ECO:0000266"/>
    <property type="project" value="RGD"/>
</dbReference>
<dbReference type="GO" id="GO:0035711">
    <property type="term" value="P:T-helper 1 cell activation"/>
    <property type="evidence" value="ECO:0000266"/>
    <property type="project" value="RGD"/>
</dbReference>
<dbReference type="FunFam" id="1.20.1250.10:FF:000020">
    <property type="entry name" value="Interleukin-12 subunit alpha"/>
    <property type="match status" value="1"/>
</dbReference>
<dbReference type="Gene3D" id="1.20.1250.10">
    <property type="match status" value="1"/>
</dbReference>
<dbReference type="InterPro" id="IPR009079">
    <property type="entry name" value="4_helix_cytokine-like_core"/>
</dbReference>
<dbReference type="InterPro" id="IPR050676">
    <property type="entry name" value="IL-12"/>
</dbReference>
<dbReference type="InterPro" id="IPR004281">
    <property type="entry name" value="IL-12_alpha"/>
</dbReference>
<dbReference type="PANTHER" id="PTHR48485:SF1">
    <property type="entry name" value="INTERLEUKIN-12 SUBUNIT ALPHA"/>
    <property type="match status" value="1"/>
</dbReference>
<dbReference type="PANTHER" id="PTHR48485">
    <property type="entry name" value="INTERLEUKIN-12 SUBUNIT BETA-RELATED"/>
    <property type="match status" value="1"/>
</dbReference>
<dbReference type="Pfam" id="PF03039">
    <property type="entry name" value="IL12"/>
    <property type="match status" value="1"/>
</dbReference>
<dbReference type="SUPFAM" id="SSF47266">
    <property type="entry name" value="4-helical cytokines"/>
    <property type="match status" value="1"/>
</dbReference>
<feature type="signal peptide" evidence="1">
    <location>
        <begin position="1"/>
        <end position="22"/>
    </location>
</feature>
<feature type="chain" id="PRO_0000015611" description="Interleukin-12 subunit alpha">
    <location>
        <begin position="23"/>
        <end position="215"/>
    </location>
</feature>
<feature type="glycosylation site" description="N-linked (GlcNAc...) asparagine" evidence="4">
    <location>
        <position position="35"/>
    </location>
</feature>
<feature type="glycosylation site" description="N-linked (GlcNAc...) asparagine" evidence="4">
    <location>
        <position position="89"/>
    </location>
</feature>
<feature type="glycosylation site" description="N-linked (GlcNAc...) asparagine" evidence="4">
    <location>
        <position position="167"/>
    </location>
</feature>
<feature type="disulfide bond" evidence="2">
    <location>
        <begin position="33"/>
        <end position="106"/>
    </location>
</feature>
<feature type="disulfide bond" evidence="1">
    <location>
        <begin position="60"/>
        <end position="192"/>
    </location>
</feature>
<feature type="disulfide bond" evidence="1">
    <location>
        <begin position="81"/>
        <end position="119"/>
    </location>
</feature>
<feature type="disulfide bond" description="Interchain" evidence="5">
    <location>
        <position position="92"/>
    </location>
</feature>
<proteinExistence type="evidence at transcript level"/>
<keyword id="KW-0202">Cytokine</keyword>
<keyword id="KW-1015">Disulfide bond</keyword>
<keyword id="KW-0325">Glycoprotein</keyword>
<keyword id="KW-0339">Growth factor</keyword>
<keyword id="KW-1185">Reference proteome</keyword>
<keyword id="KW-0964">Secreted</keyword>
<keyword id="KW-0732">Signal</keyword>
<comment type="function">
    <text evidence="2 3">Heterodimerizes with IL12B to form the IL-12 cytokine or with EBI3/IL27B to form the IL-35 cytokine. IL-12 is primarily produced by professional antigen-presenting cells (APCs) such as B-cells and dendritic cells (DCs) as well as macrophages and granulocytes and regulates T-cell and natural killer-cell responses, induces the production of interferon-gamma (IFN-gamma), favors the differentiation of T-helper 1 (Th1) cells and is an important link between innate resistance and adaptive immunity. Mechanistically, exerts its biological effects through a receptor composed of IL12R1 and IL12R2 subunits. Binding to the receptor results in the rapid tyrosine phosphorylation of a number of cellular substrates including the JAK family kinases TYK2 and JAK2. In turn, recruited STAT4 gets phosphorylated and translocates to the nucleus where it regulates cytokine/growth factor responsive genes (By similarity). As part of IL-35, plays essential roles in maintaining the immune homeostasis of the liver microenvironment and also functions as an immune-suppressive cytokine (By similarity). Mediates biological events through unconventional receptors composed of IL12RB2 and gp130/IL6ST heterodimers or homodimers. Signaling requires the transcription factors STAT1 and STAT4, which form a unique heterodimer that binds to distinct DNA sites (By similarity).</text>
</comment>
<comment type="subunit">
    <text evidence="2 3">Heterodimer with IL12B; disulfide-linked. This heterodimer is known as interleukin IL-12. Heterodimer with EBI3/IL27B; not disulfide-linked. This heterodimer is known as interleukin IL-35. Interacts with NBR1; this interaction promotes IL-12 secretion (By similarity).</text>
</comment>
<comment type="subcellular location">
    <subcellularLocation>
        <location evidence="2">Secreted</location>
    </subcellularLocation>
</comment>
<comment type="similarity">
    <text evidence="5">Belongs to the IL-6 superfamily.</text>
</comment>
<name>IL12A_RAT</name>
<evidence type="ECO:0000250" key="1"/>
<evidence type="ECO:0000250" key="2">
    <source>
        <dbReference type="UniProtKB" id="P29459"/>
    </source>
</evidence>
<evidence type="ECO:0000250" key="3">
    <source>
        <dbReference type="UniProtKB" id="P43431"/>
    </source>
</evidence>
<evidence type="ECO:0000255" key="4"/>
<evidence type="ECO:0000305" key="5"/>
<accession>Q9R103</accession>
<reference key="1">
    <citation type="submission" date="1999-08" db="EMBL/GenBank/DDBJ databases">
        <title>Cloning of the rat interleukin 12 p35 subunit.</title>
        <authorList>
            <person name="Verma N.D."/>
            <person name="He X.Y."/>
            <person name="Hall B.M."/>
        </authorList>
    </citation>
    <scope>NUCLEOTIDE SEQUENCE [MRNA]</scope>
    <source>
        <strain>DA</strain>
    </source>
</reference>
<sequence length="215" mass="24246">MCQSRYLLFLATLVLLNHLTSARVIPVSGPAKCLNQSQNLLKTTDDMVRTAREKLKHYSCTAGDIDHEDITRDKTSTLEACLPLELHKNESCLATKETSSIIRGSCLPPQKTSLMMTLCLGSIYEDLKMYQSEFQAINAALQSHNHQQITLDRNMLMAIDELMRSLNHSGETLHQKAPMGEADPYRVKMKLCILLHAFSTRVMTINRVMNYLSSS</sequence>
<protein>
    <recommendedName>
        <fullName>Interleukin-12 subunit alpha</fullName>
        <shortName>IL-12A</shortName>
    </recommendedName>
    <alternativeName>
        <fullName>Cytotoxic lymphocyte maturation factor 35 kDa subunit</fullName>
        <shortName>CLMF p35</shortName>
    </alternativeName>
    <alternativeName>
        <fullName>IL-12 subunit p35</fullName>
    </alternativeName>
</protein>
<gene>
    <name type="primary">Il12a</name>
</gene>
<organism>
    <name type="scientific">Rattus norvegicus</name>
    <name type="common">Rat</name>
    <dbReference type="NCBI Taxonomy" id="10116"/>
    <lineage>
        <taxon>Eukaryota</taxon>
        <taxon>Metazoa</taxon>
        <taxon>Chordata</taxon>
        <taxon>Craniata</taxon>
        <taxon>Vertebrata</taxon>
        <taxon>Euteleostomi</taxon>
        <taxon>Mammalia</taxon>
        <taxon>Eutheria</taxon>
        <taxon>Euarchontoglires</taxon>
        <taxon>Glires</taxon>
        <taxon>Rodentia</taxon>
        <taxon>Myomorpha</taxon>
        <taxon>Muroidea</taxon>
        <taxon>Muridae</taxon>
        <taxon>Murinae</taxon>
        <taxon>Rattus</taxon>
    </lineage>
</organism>